<organism>
    <name type="scientific">Wolinella succinogenes (strain ATCC 29543 / DSM 1740 / CCUG 13145 / JCM 31913 / LMG 7466 / NCTC 11488 / FDC 602W)</name>
    <name type="common">Vibrio succinogenes</name>
    <dbReference type="NCBI Taxonomy" id="273121"/>
    <lineage>
        <taxon>Bacteria</taxon>
        <taxon>Pseudomonadati</taxon>
        <taxon>Campylobacterota</taxon>
        <taxon>Epsilonproteobacteria</taxon>
        <taxon>Campylobacterales</taxon>
        <taxon>Helicobacteraceae</taxon>
        <taxon>Wolinella</taxon>
    </lineage>
</organism>
<evidence type="ECO:0000250" key="1"/>
<evidence type="ECO:0000255" key="2">
    <source>
        <dbReference type="PROSITE-ProRule" id="PRU00711"/>
    </source>
</evidence>
<keyword id="KW-0004">4Fe-4S</keyword>
<keyword id="KW-0903">Direct protein sequencing</keyword>
<keyword id="KW-0249">Electron transport</keyword>
<keyword id="KW-0408">Iron</keyword>
<keyword id="KW-0411">Iron-sulfur</keyword>
<keyword id="KW-0479">Metal-binding</keyword>
<keyword id="KW-1185">Reference proteome</keyword>
<keyword id="KW-0677">Repeat</keyword>
<keyword id="KW-0813">Transport</keyword>
<protein>
    <recommendedName>
        <fullName>Formate dehydrogenase iron-sulfur subunit</fullName>
    </recommendedName>
</protein>
<feature type="chain" id="PRO_0000159253" description="Formate dehydrogenase iron-sulfur subunit">
    <location>
        <begin position="1"/>
        <end position="200"/>
    </location>
</feature>
<feature type="domain" description="4Fe-4S ferredoxin-type 1" evidence="2">
    <location>
        <begin position="7"/>
        <end position="37"/>
    </location>
</feature>
<feature type="domain" description="4Fe-4S ferredoxin-type 2" evidence="2">
    <location>
        <begin position="50"/>
        <end position="81"/>
    </location>
</feature>
<feature type="domain" description="4Fe-4S ferredoxin-type 3" evidence="2">
    <location>
        <begin position="82"/>
        <end position="111"/>
    </location>
</feature>
<feature type="binding site" evidence="1">
    <location>
        <position position="16"/>
    </location>
    <ligand>
        <name>[4Fe-4S] cluster</name>
        <dbReference type="ChEBI" id="CHEBI:49883"/>
        <label>1</label>
    </ligand>
</feature>
<feature type="binding site" evidence="1">
    <location>
        <position position="19"/>
    </location>
    <ligand>
        <name>[4Fe-4S] cluster</name>
        <dbReference type="ChEBI" id="CHEBI:49883"/>
        <label>1</label>
    </ligand>
</feature>
<feature type="binding site" evidence="1">
    <location>
        <position position="22"/>
    </location>
    <ligand>
        <name>[4Fe-4S] cluster</name>
        <dbReference type="ChEBI" id="CHEBI:49883"/>
        <label>1</label>
    </ligand>
</feature>
<feature type="binding site" evidence="1">
    <location>
        <position position="26"/>
    </location>
    <ligand>
        <name>[4Fe-4S] cluster</name>
        <dbReference type="ChEBI" id="CHEBI:49883"/>
        <label>2</label>
    </ligand>
</feature>
<feature type="binding site" evidence="1">
    <location>
        <position position="59"/>
    </location>
    <ligand>
        <name>[4Fe-4S] cluster</name>
        <dbReference type="ChEBI" id="CHEBI:49883"/>
        <label>3</label>
    </ligand>
</feature>
<feature type="binding site" evidence="1">
    <location>
        <position position="62"/>
    </location>
    <ligand>
        <name>[4Fe-4S] cluster</name>
        <dbReference type="ChEBI" id="CHEBI:49883"/>
        <label>3</label>
    </ligand>
</feature>
<feature type="binding site" evidence="1">
    <location>
        <position position="67"/>
    </location>
    <ligand>
        <name>[4Fe-4S] cluster</name>
        <dbReference type="ChEBI" id="CHEBI:49883"/>
        <label>3</label>
    </ligand>
</feature>
<feature type="binding site" evidence="1">
    <location>
        <position position="71"/>
    </location>
    <ligand>
        <name>[4Fe-4S] cluster</name>
        <dbReference type="ChEBI" id="CHEBI:49883"/>
        <label>4</label>
    </ligand>
</feature>
<feature type="binding site" evidence="1">
    <location>
        <position position="91"/>
    </location>
    <ligand>
        <name>[4Fe-4S] cluster</name>
        <dbReference type="ChEBI" id="CHEBI:49883"/>
        <label>4</label>
    </ligand>
</feature>
<feature type="binding site" evidence="1">
    <location>
        <position position="94"/>
    </location>
    <ligand>
        <name>[4Fe-4S] cluster</name>
        <dbReference type="ChEBI" id="CHEBI:49883"/>
        <label>4</label>
    </ligand>
</feature>
<feature type="binding site" evidence="1">
    <location>
        <position position="97"/>
    </location>
    <ligand>
        <name>[4Fe-4S] cluster</name>
        <dbReference type="ChEBI" id="CHEBI:49883"/>
        <label>4</label>
    </ligand>
</feature>
<feature type="binding site" evidence="1">
    <location>
        <position position="101"/>
    </location>
    <ligand>
        <name>[4Fe-4S] cluster</name>
        <dbReference type="ChEBI" id="CHEBI:49883"/>
        <label>3</label>
    </ligand>
</feature>
<feature type="binding site" evidence="1">
    <location>
        <position position="123"/>
    </location>
    <ligand>
        <name>[4Fe-4S] cluster</name>
        <dbReference type="ChEBI" id="CHEBI:49883"/>
        <label>2</label>
    </ligand>
</feature>
<feature type="binding site" evidence="1">
    <location>
        <position position="126"/>
    </location>
    <ligand>
        <name>[4Fe-4S] cluster</name>
        <dbReference type="ChEBI" id="CHEBI:49883"/>
        <label>2</label>
    </ligand>
</feature>
<feature type="binding site" evidence="1">
    <location>
        <position position="155"/>
    </location>
    <ligand>
        <name>[4Fe-4S] cluster</name>
        <dbReference type="ChEBI" id="CHEBI:49883"/>
        <label>2</label>
    </ligand>
</feature>
<feature type="binding site" evidence="1">
    <location>
        <position position="159"/>
    </location>
    <ligand>
        <name>[4Fe-4S] cluster</name>
        <dbReference type="ChEBI" id="CHEBI:49883"/>
        <label>1</label>
    </ligand>
</feature>
<comment type="function">
    <text>This chain is an electron transfer unit containing 18 cysteine residues, 16 of which occur in four clusters.</text>
</comment>
<comment type="cofactor">
    <cofactor evidence="1">
        <name>[4Fe-4S] cluster</name>
        <dbReference type="ChEBI" id="CHEBI:49883"/>
    </cofactor>
    <text evidence="1">Binds 4 [4Fe-4S] clusters.</text>
</comment>
<comment type="subunit">
    <text>Formate dehydrogenase is a membrane-bound complex, formed of at least three different subunits.</text>
</comment>
<gene>
    <name type="primary">fdhB1</name>
    <name type="ordered locus">WS0028</name>
</gene>
<gene>
    <name type="primary">fdhB2</name>
    <name type="ordered locus">WS0735</name>
</gene>
<gene>
    <name type="primary">fdhB3</name>
    <name type="ordered locus">WS1147</name>
</gene>
<reference key="1">
    <citation type="journal article" date="1991" name="Arch. Microbiol.">
        <title>Cloning and nucleotide sequence of the structural genes encoding the formate dehydrogenase of Wolinella succinogenes.</title>
        <authorList>
            <person name="Bokranz M."/>
            <person name="Gutmann M."/>
            <person name="Koertner C."/>
            <person name="Kojro E."/>
            <person name="Fahrenholz F."/>
            <person name="Lauterbach F."/>
            <person name="Kroeger A."/>
        </authorList>
    </citation>
    <scope>NUCLEOTIDE SEQUENCE [GENOMIC DNA]</scope>
    <scope>PROTEIN SEQUENCE OF 1-18</scope>
</reference>
<reference key="2">
    <citation type="journal article" date="2003" name="Proc. Natl. Acad. Sci. U.S.A.">
        <title>Complete genome sequence and analysis of Wolinella succinogenes.</title>
        <authorList>
            <person name="Baar C."/>
            <person name="Eppinger M."/>
            <person name="Raddatz G."/>
            <person name="Simon J."/>
            <person name="Lanz C."/>
            <person name="Klimmek O."/>
            <person name="Nandakumar R."/>
            <person name="Gross R."/>
            <person name="Rosinus A."/>
            <person name="Keller H."/>
            <person name="Jagtap P."/>
            <person name="Linke B."/>
            <person name="Meyer F."/>
            <person name="Lederer H."/>
            <person name="Schuster S.C."/>
        </authorList>
    </citation>
    <scope>NUCLEOTIDE SEQUENCE [LARGE SCALE GENOMIC DNA]</scope>
    <source>
        <strain>ATCC 29543 / DSM 1740 / CCUG 13145 / JCM 31913 / LMG 7466 / NCTC 11488 / FDC 602W</strain>
    </source>
</reference>
<sequence>MESQARVKFYCDEARCIDCHGCDVACKEAHHLPVGVNRRRVVTLNEGLVGKEKSLSIACMHCSDAPCAQVCPVDCFYVRADGIVLHDKEKCIGCGYCLYACPFGAPQFPKSGIFGSRGPMDKCTFCAGGPEETHSEKEYKLYGQNRIAEGKVPVCAAMCSTKALLAGDSDSISLIIRERVLKRGSGTASVPYTWSQAYKD</sequence>
<proteinExistence type="evidence at protein level"/>
<accession>P27273</accession>
<name>FDHB_WOLSU</name>
<dbReference type="EMBL" id="X54057">
    <property type="protein sequence ID" value="CAA37990.1"/>
    <property type="molecule type" value="Genomic_DNA"/>
</dbReference>
<dbReference type="EMBL" id="BX571657">
    <property type="protein sequence ID" value="CAE09201.1"/>
    <property type="molecule type" value="Genomic_DNA"/>
</dbReference>
<dbReference type="EMBL" id="BX571659">
    <property type="protein sequence ID" value="CAE09854.1"/>
    <property type="molecule type" value="Genomic_DNA"/>
</dbReference>
<dbReference type="EMBL" id="BX571660">
    <property type="protein sequence ID" value="CAE10234.1"/>
    <property type="molecule type" value="Genomic_DNA"/>
</dbReference>
<dbReference type="PIR" id="S18214">
    <property type="entry name" value="S18214"/>
</dbReference>
<dbReference type="RefSeq" id="WP_011138001.1">
    <property type="nucleotide sequence ID" value="NC_005090.1"/>
</dbReference>
<dbReference type="SMR" id="P27273"/>
<dbReference type="STRING" id="273121.WS0028"/>
<dbReference type="KEGG" id="wsu:WS0028"/>
<dbReference type="KEGG" id="wsu:WS0735"/>
<dbReference type="KEGG" id="wsu:WS1147"/>
<dbReference type="eggNOG" id="COG0437">
    <property type="taxonomic scope" value="Bacteria"/>
</dbReference>
<dbReference type="HOGENOM" id="CLU_043374_2_1_7"/>
<dbReference type="Proteomes" id="UP000000422">
    <property type="component" value="Chromosome"/>
</dbReference>
<dbReference type="GO" id="GO:0051539">
    <property type="term" value="F:4 iron, 4 sulfur cluster binding"/>
    <property type="evidence" value="ECO:0007669"/>
    <property type="project" value="UniProtKB-KW"/>
</dbReference>
<dbReference type="GO" id="GO:0009055">
    <property type="term" value="F:electron transfer activity"/>
    <property type="evidence" value="ECO:0007669"/>
    <property type="project" value="InterPro"/>
</dbReference>
<dbReference type="GO" id="GO:0046872">
    <property type="term" value="F:metal ion binding"/>
    <property type="evidence" value="ECO:0007669"/>
    <property type="project" value="UniProtKB-KW"/>
</dbReference>
<dbReference type="CDD" id="cd16371">
    <property type="entry name" value="DMSOR_beta_like"/>
    <property type="match status" value="1"/>
</dbReference>
<dbReference type="Gene3D" id="3.30.70.20">
    <property type="match status" value="2"/>
</dbReference>
<dbReference type="InterPro" id="IPR017896">
    <property type="entry name" value="4Fe4S_Fe-S-bd"/>
</dbReference>
<dbReference type="InterPro" id="IPR017900">
    <property type="entry name" value="4Fe4S_Fe_S_CS"/>
</dbReference>
<dbReference type="InterPro" id="IPR000813">
    <property type="entry name" value="7Fe_ferredoxin"/>
</dbReference>
<dbReference type="InterPro" id="IPR050954">
    <property type="entry name" value="ET_IronSulfur_Cluster-Binding"/>
</dbReference>
<dbReference type="NCBIfam" id="NF038355">
    <property type="entry name" value="FDH3_beta"/>
    <property type="match status" value="1"/>
</dbReference>
<dbReference type="PANTHER" id="PTHR43177">
    <property type="entry name" value="PROTEIN NRFC"/>
    <property type="match status" value="1"/>
</dbReference>
<dbReference type="PANTHER" id="PTHR43177:SF3">
    <property type="entry name" value="PROTEIN NRFC HOMOLOG"/>
    <property type="match status" value="1"/>
</dbReference>
<dbReference type="Pfam" id="PF13247">
    <property type="entry name" value="Fer4_11"/>
    <property type="match status" value="1"/>
</dbReference>
<dbReference type="PRINTS" id="PR00354">
    <property type="entry name" value="7FE8SFRDOXIN"/>
</dbReference>
<dbReference type="SUPFAM" id="SSF54862">
    <property type="entry name" value="4Fe-4S ferredoxins"/>
    <property type="match status" value="1"/>
</dbReference>
<dbReference type="PROSITE" id="PS00198">
    <property type="entry name" value="4FE4S_FER_1"/>
    <property type="match status" value="1"/>
</dbReference>
<dbReference type="PROSITE" id="PS51379">
    <property type="entry name" value="4FE4S_FER_2"/>
    <property type="match status" value="3"/>
</dbReference>